<dbReference type="EC" id="3.1.26.5" evidence="1"/>
<dbReference type="EMBL" id="CP000961">
    <property type="protein sequence ID" value="ACA89180.1"/>
    <property type="molecule type" value="Genomic_DNA"/>
</dbReference>
<dbReference type="SMR" id="B1KQ67"/>
<dbReference type="STRING" id="392500.Swoo_4931"/>
<dbReference type="KEGG" id="swd:Swoo_4931"/>
<dbReference type="eggNOG" id="COG0594">
    <property type="taxonomic scope" value="Bacteria"/>
</dbReference>
<dbReference type="HOGENOM" id="CLU_117179_11_0_6"/>
<dbReference type="Proteomes" id="UP000002168">
    <property type="component" value="Chromosome"/>
</dbReference>
<dbReference type="GO" id="GO:0030677">
    <property type="term" value="C:ribonuclease P complex"/>
    <property type="evidence" value="ECO:0007669"/>
    <property type="project" value="TreeGrafter"/>
</dbReference>
<dbReference type="GO" id="GO:0042781">
    <property type="term" value="F:3'-tRNA processing endoribonuclease activity"/>
    <property type="evidence" value="ECO:0007669"/>
    <property type="project" value="TreeGrafter"/>
</dbReference>
<dbReference type="GO" id="GO:0004526">
    <property type="term" value="F:ribonuclease P activity"/>
    <property type="evidence" value="ECO:0007669"/>
    <property type="project" value="UniProtKB-UniRule"/>
</dbReference>
<dbReference type="GO" id="GO:0000049">
    <property type="term" value="F:tRNA binding"/>
    <property type="evidence" value="ECO:0007669"/>
    <property type="project" value="UniProtKB-UniRule"/>
</dbReference>
<dbReference type="GO" id="GO:0001682">
    <property type="term" value="P:tRNA 5'-leader removal"/>
    <property type="evidence" value="ECO:0007669"/>
    <property type="project" value="UniProtKB-UniRule"/>
</dbReference>
<dbReference type="Gene3D" id="3.30.230.10">
    <property type="match status" value="1"/>
</dbReference>
<dbReference type="HAMAP" id="MF_00227">
    <property type="entry name" value="RNase_P"/>
    <property type="match status" value="1"/>
</dbReference>
<dbReference type="InterPro" id="IPR020568">
    <property type="entry name" value="Ribosomal_Su5_D2-typ_SF"/>
</dbReference>
<dbReference type="InterPro" id="IPR014721">
    <property type="entry name" value="Ribsml_uS5_D2-typ_fold_subgr"/>
</dbReference>
<dbReference type="InterPro" id="IPR000100">
    <property type="entry name" value="RNase_P"/>
</dbReference>
<dbReference type="InterPro" id="IPR020539">
    <property type="entry name" value="RNase_P_CS"/>
</dbReference>
<dbReference type="NCBIfam" id="TIGR00188">
    <property type="entry name" value="rnpA"/>
    <property type="match status" value="1"/>
</dbReference>
<dbReference type="PANTHER" id="PTHR33992">
    <property type="entry name" value="RIBONUCLEASE P PROTEIN COMPONENT"/>
    <property type="match status" value="1"/>
</dbReference>
<dbReference type="PANTHER" id="PTHR33992:SF1">
    <property type="entry name" value="RIBONUCLEASE P PROTEIN COMPONENT"/>
    <property type="match status" value="1"/>
</dbReference>
<dbReference type="Pfam" id="PF00825">
    <property type="entry name" value="Ribonuclease_P"/>
    <property type="match status" value="1"/>
</dbReference>
<dbReference type="SUPFAM" id="SSF54211">
    <property type="entry name" value="Ribosomal protein S5 domain 2-like"/>
    <property type="match status" value="1"/>
</dbReference>
<dbReference type="PROSITE" id="PS00648">
    <property type="entry name" value="RIBONUCLEASE_P"/>
    <property type="match status" value="1"/>
</dbReference>
<sequence length="119" mass="13964">MTISYTFTRELRLLTPAQFKSVFSKPIKASSAEITLLAIPNTEQHPRIGLTVAKRFVKKAHQRNRIKRIIRDNFRLHQHELPAIDIVVLVRNGVVEMENAELHKLVEKLWRKLNRRYNG</sequence>
<gene>
    <name evidence="1" type="primary">rnpA</name>
    <name type="ordered locus">Swoo_4931</name>
</gene>
<keyword id="KW-0255">Endonuclease</keyword>
<keyword id="KW-0378">Hydrolase</keyword>
<keyword id="KW-0540">Nuclease</keyword>
<keyword id="KW-1185">Reference proteome</keyword>
<keyword id="KW-0694">RNA-binding</keyword>
<keyword id="KW-0819">tRNA processing</keyword>
<organism>
    <name type="scientific">Shewanella woodyi (strain ATCC 51908 / MS32)</name>
    <dbReference type="NCBI Taxonomy" id="392500"/>
    <lineage>
        <taxon>Bacteria</taxon>
        <taxon>Pseudomonadati</taxon>
        <taxon>Pseudomonadota</taxon>
        <taxon>Gammaproteobacteria</taxon>
        <taxon>Alteromonadales</taxon>
        <taxon>Shewanellaceae</taxon>
        <taxon>Shewanella</taxon>
    </lineage>
</organism>
<evidence type="ECO:0000255" key="1">
    <source>
        <dbReference type="HAMAP-Rule" id="MF_00227"/>
    </source>
</evidence>
<proteinExistence type="inferred from homology"/>
<protein>
    <recommendedName>
        <fullName evidence="1">Ribonuclease P protein component</fullName>
        <shortName evidence="1">RNase P protein</shortName>
        <shortName evidence="1">RNaseP protein</shortName>
        <ecNumber evidence="1">3.1.26.5</ecNumber>
    </recommendedName>
    <alternativeName>
        <fullName evidence="1">Protein C5</fullName>
    </alternativeName>
</protein>
<accession>B1KQ67</accession>
<name>RNPA_SHEWM</name>
<feature type="chain" id="PRO_1000194671" description="Ribonuclease P protein component">
    <location>
        <begin position="1"/>
        <end position="119"/>
    </location>
</feature>
<comment type="function">
    <text evidence="1">RNaseP catalyzes the removal of the 5'-leader sequence from pre-tRNA to produce the mature 5'-terminus. It can also cleave other RNA substrates such as 4.5S RNA. The protein component plays an auxiliary but essential role in vivo by binding to the 5'-leader sequence and broadening the substrate specificity of the ribozyme.</text>
</comment>
<comment type="catalytic activity">
    <reaction evidence="1">
        <text>Endonucleolytic cleavage of RNA, removing 5'-extranucleotides from tRNA precursor.</text>
        <dbReference type="EC" id="3.1.26.5"/>
    </reaction>
</comment>
<comment type="subunit">
    <text evidence="1">Consists of a catalytic RNA component (M1 or rnpB) and a protein subunit.</text>
</comment>
<comment type="similarity">
    <text evidence="1">Belongs to the RnpA family.</text>
</comment>
<reference key="1">
    <citation type="submission" date="2008-02" db="EMBL/GenBank/DDBJ databases">
        <title>Complete sequence of Shewanella woodyi ATCC 51908.</title>
        <authorList>
            <consortium name="US DOE Joint Genome Institute"/>
            <person name="Copeland A."/>
            <person name="Lucas S."/>
            <person name="Lapidus A."/>
            <person name="Glavina del Rio T."/>
            <person name="Dalin E."/>
            <person name="Tice H."/>
            <person name="Bruce D."/>
            <person name="Goodwin L."/>
            <person name="Pitluck S."/>
            <person name="Sims D."/>
            <person name="Brettin T."/>
            <person name="Detter J.C."/>
            <person name="Han C."/>
            <person name="Kuske C.R."/>
            <person name="Schmutz J."/>
            <person name="Larimer F."/>
            <person name="Land M."/>
            <person name="Hauser L."/>
            <person name="Kyrpides N."/>
            <person name="Lykidis A."/>
            <person name="Zhao J.-S."/>
            <person name="Richardson P."/>
        </authorList>
    </citation>
    <scope>NUCLEOTIDE SEQUENCE [LARGE SCALE GENOMIC DNA]</scope>
    <source>
        <strain>ATCC 51908 / MS32</strain>
    </source>
</reference>